<dbReference type="EC" id="2.3.1.191" evidence="1"/>
<dbReference type="EMBL" id="CP000352">
    <property type="protein sequence ID" value="ABF08328.1"/>
    <property type="molecule type" value="Genomic_DNA"/>
</dbReference>
<dbReference type="RefSeq" id="WP_011516195.1">
    <property type="nucleotide sequence ID" value="NC_007973.1"/>
</dbReference>
<dbReference type="SMR" id="Q1LNE8"/>
<dbReference type="STRING" id="266264.Rmet_1445"/>
<dbReference type="KEGG" id="rme:Rmet_1445"/>
<dbReference type="eggNOG" id="COG1044">
    <property type="taxonomic scope" value="Bacteria"/>
</dbReference>
<dbReference type="HOGENOM" id="CLU_049865_0_1_4"/>
<dbReference type="UniPathway" id="UPA00973"/>
<dbReference type="Proteomes" id="UP000002429">
    <property type="component" value="Chromosome"/>
</dbReference>
<dbReference type="GO" id="GO:0016020">
    <property type="term" value="C:membrane"/>
    <property type="evidence" value="ECO:0007669"/>
    <property type="project" value="GOC"/>
</dbReference>
<dbReference type="GO" id="GO:0016410">
    <property type="term" value="F:N-acyltransferase activity"/>
    <property type="evidence" value="ECO:0007669"/>
    <property type="project" value="InterPro"/>
</dbReference>
<dbReference type="GO" id="GO:0009245">
    <property type="term" value="P:lipid A biosynthetic process"/>
    <property type="evidence" value="ECO:0007669"/>
    <property type="project" value="UniProtKB-UniRule"/>
</dbReference>
<dbReference type="CDD" id="cd03352">
    <property type="entry name" value="LbH_LpxD"/>
    <property type="match status" value="1"/>
</dbReference>
<dbReference type="Gene3D" id="2.160.10.10">
    <property type="entry name" value="Hexapeptide repeat proteins"/>
    <property type="match status" value="1"/>
</dbReference>
<dbReference type="Gene3D" id="3.40.1390.10">
    <property type="entry name" value="MurE/MurF, N-terminal domain"/>
    <property type="match status" value="1"/>
</dbReference>
<dbReference type="HAMAP" id="MF_00523">
    <property type="entry name" value="LpxD"/>
    <property type="match status" value="1"/>
</dbReference>
<dbReference type="InterPro" id="IPR001451">
    <property type="entry name" value="Hexapep"/>
</dbReference>
<dbReference type="InterPro" id="IPR018357">
    <property type="entry name" value="Hexapep_transf_CS"/>
</dbReference>
<dbReference type="InterPro" id="IPR007691">
    <property type="entry name" value="LpxD"/>
</dbReference>
<dbReference type="InterPro" id="IPR011004">
    <property type="entry name" value="Trimer_LpxA-like_sf"/>
</dbReference>
<dbReference type="InterPro" id="IPR020573">
    <property type="entry name" value="UDP_GlcNAc_AcTrfase_non-rep"/>
</dbReference>
<dbReference type="NCBIfam" id="TIGR01853">
    <property type="entry name" value="lipid_A_lpxD"/>
    <property type="match status" value="1"/>
</dbReference>
<dbReference type="NCBIfam" id="NF002060">
    <property type="entry name" value="PRK00892.1"/>
    <property type="match status" value="1"/>
</dbReference>
<dbReference type="PANTHER" id="PTHR43378">
    <property type="entry name" value="UDP-3-O-ACYLGLUCOSAMINE N-ACYLTRANSFERASE"/>
    <property type="match status" value="1"/>
</dbReference>
<dbReference type="PANTHER" id="PTHR43378:SF2">
    <property type="entry name" value="UDP-3-O-ACYLGLUCOSAMINE N-ACYLTRANSFERASE 1, MITOCHONDRIAL-RELATED"/>
    <property type="match status" value="1"/>
</dbReference>
<dbReference type="Pfam" id="PF00132">
    <property type="entry name" value="Hexapep"/>
    <property type="match status" value="3"/>
</dbReference>
<dbReference type="Pfam" id="PF04613">
    <property type="entry name" value="LpxD"/>
    <property type="match status" value="1"/>
</dbReference>
<dbReference type="SUPFAM" id="SSF51161">
    <property type="entry name" value="Trimeric LpxA-like enzymes"/>
    <property type="match status" value="1"/>
</dbReference>
<dbReference type="PROSITE" id="PS00101">
    <property type="entry name" value="HEXAPEP_TRANSFERASES"/>
    <property type="match status" value="2"/>
</dbReference>
<accession>Q1LNE8</accession>
<sequence>MKTPTLGQLATENGAQVVGDPDLAVVGLAPLDQAGPGDLSFLSNPLYLPQALASAAGAVIVSPADLERIRADGQAEGRNWLVARNPYVCFARVAQRFDRAANADSRTGIDPRASVAPDAVVPASCFIGPNVVIESGARLGERVRILANAFIGASAEIGEDTLIYANVSVYHRCVIGARNILHSGAVIGADGFGFAPDIGPTGVEYVKIPQVGRAVLGNDVEIGANTAVDRGAMADTVIEDGCKIDNQVQIAHNVHVGAHTVIAGTAAVSGSTKIGRFCVIGGAANFSGHLNIADRTTVSGGTSITKSITKPGGHYTSVFPFTSHGEWERNAAIVRGLSKLRERVVQLERRQRGENNAPAQNKQDEEKSS</sequence>
<organism>
    <name type="scientific">Cupriavidus metallidurans (strain ATCC 43123 / DSM 2839 / NBRC 102507 / CH34)</name>
    <name type="common">Ralstonia metallidurans</name>
    <dbReference type="NCBI Taxonomy" id="266264"/>
    <lineage>
        <taxon>Bacteria</taxon>
        <taxon>Pseudomonadati</taxon>
        <taxon>Pseudomonadota</taxon>
        <taxon>Betaproteobacteria</taxon>
        <taxon>Burkholderiales</taxon>
        <taxon>Burkholderiaceae</taxon>
        <taxon>Cupriavidus</taxon>
    </lineage>
</organism>
<proteinExistence type="inferred from homology"/>
<keyword id="KW-0012">Acyltransferase</keyword>
<keyword id="KW-0441">Lipid A biosynthesis</keyword>
<keyword id="KW-0444">Lipid biosynthesis</keyword>
<keyword id="KW-0443">Lipid metabolism</keyword>
<keyword id="KW-1185">Reference proteome</keyword>
<keyword id="KW-0677">Repeat</keyword>
<keyword id="KW-0808">Transferase</keyword>
<feature type="chain" id="PRO_0000264420" description="UDP-3-O-acylglucosamine N-acyltransferase">
    <location>
        <begin position="1"/>
        <end position="369"/>
    </location>
</feature>
<feature type="region of interest" description="Disordered" evidence="2">
    <location>
        <begin position="348"/>
        <end position="369"/>
    </location>
</feature>
<feature type="active site" description="Proton acceptor" evidence="1">
    <location>
        <position position="252"/>
    </location>
</feature>
<protein>
    <recommendedName>
        <fullName evidence="1">UDP-3-O-acylglucosamine N-acyltransferase</fullName>
        <ecNumber evidence="1">2.3.1.191</ecNumber>
    </recommendedName>
</protein>
<name>LPXD_CUPMC</name>
<reference key="1">
    <citation type="journal article" date="2010" name="PLoS ONE">
        <title>The complete genome sequence of Cupriavidus metallidurans strain CH34, a master survivalist in harsh and anthropogenic environments.</title>
        <authorList>
            <person name="Janssen P.J."/>
            <person name="Van Houdt R."/>
            <person name="Moors H."/>
            <person name="Monsieurs P."/>
            <person name="Morin N."/>
            <person name="Michaux A."/>
            <person name="Benotmane M.A."/>
            <person name="Leys N."/>
            <person name="Vallaeys T."/>
            <person name="Lapidus A."/>
            <person name="Monchy S."/>
            <person name="Medigue C."/>
            <person name="Taghavi S."/>
            <person name="McCorkle S."/>
            <person name="Dunn J."/>
            <person name="van der Lelie D."/>
            <person name="Mergeay M."/>
        </authorList>
    </citation>
    <scope>NUCLEOTIDE SEQUENCE [LARGE SCALE GENOMIC DNA]</scope>
    <source>
        <strain>ATCC 43123 / DSM 2839 / NBRC 102507 / CH34</strain>
    </source>
</reference>
<comment type="function">
    <text evidence="1">Catalyzes the N-acylation of UDP-3-O-acylglucosamine using 3-hydroxyacyl-ACP as the acyl donor. Is involved in the biosynthesis of lipid A, a phosphorylated glycolipid that anchors the lipopolysaccharide to the outer membrane of the cell.</text>
</comment>
<comment type="catalytic activity">
    <reaction evidence="1">
        <text>a UDP-3-O-[(3R)-3-hydroxyacyl]-alpha-D-glucosamine + a (3R)-hydroxyacyl-[ACP] = a UDP-2-N,3-O-bis[(3R)-3-hydroxyacyl]-alpha-D-glucosamine + holo-[ACP] + H(+)</text>
        <dbReference type="Rhea" id="RHEA:53836"/>
        <dbReference type="Rhea" id="RHEA-COMP:9685"/>
        <dbReference type="Rhea" id="RHEA-COMP:9945"/>
        <dbReference type="ChEBI" id="CHEBI:15378"/>
        <dbReference type="ChEBI" id="CHEBI:64479"/>
        <dbReference type="ChEBI" id="CHEBI:78827"/>
        <dbReference type="ChEBI" id="CHEBI:137740"/>
        <dbReference type="ChEBI" id="CHEBI:137748"/>
        <dbReference type="EC" id="2.3.1.191"/>
    </reaction>
</comment>
<comment type="pathway">
    <text evidence="1">Bacterial outer membrane biogenesis; LPS lipid A biosynthesis.</text>
</comment>
<comment type="subunit">
    <text evidence="1">Homotrimer.</text>
</comment>
<comment type="similarity">
    <text evidence="1">Belongs to the transferase hexapeptide repeat family. LpxD subfamily.</text>
</comment>
<gene>
    <name evidence="1" type="primary">lpxD</name>
    <name type="ordered locus">Rmet_1445</name>
</gene>
<evidence type="ECO:0000255" key="1">
    <source>
        <dbReference type="HAMAP-Rule" id="MF_00523"/>
    </source>
</evidence>
<evidence type="ECO:0000256" key="2">
    <source>
        <dbReference type="SAM" id="MobiDB-lite"/>
    </source>
</evidence>